<reference key="1">
    <citation type="journal article" date="2002" name="Proc. Natl. Acad. Sci. U.S.A.">
        <title>Genome sequence of Streptococcus mutans UA159, a cariogenic dental pathogen.</title>
        <authorList>
            <person name="Ajdic D.J."/>
            <person name="McShan W.M."/>
            <person name="McLaughlin R.E."/>
            <person name="Savic G."/>
            <person name="Chang J."/>
            <person name="Carson M.B."/>
            <person name="Primeaux C."/>
            <person name="Tian R."/>
            <person name="Kenton S."/>
            <person name="Jia H.G."/>
            <person name="Lin S.P."/>
            <person name="Qian Y."/>
            <person name="Li S."/>
            <person name="Zhu H."/>
            <person name="Najar F.Z."/>
            <person name="Lai H."/>
            <person name="White J."/>
            <person name="Roe B.A."/>
            <person name="Ferretti J.J."/>
        </authorList>
    </citation>
    <scope>NUCLEOTIDE SEQUENCE [LARGE SCALE GENOMIC DNA]</scope>
    <source>
        <strain>ATCC 700610 / UA159</strain>
    </source>
</reference>
<accession>P59311</accession>
<comment type="function">
    <text evidence="1">Catalyzes the NADPH-dependent reduction of N-acetyl-5-glutamyl phosphate to yield N-acetyl-L-glutamate 5-semialdehyde.</text>
</comment>
<comment type="catalytic activity">
    <reaction evidence="1">
        <text>N-acetyl-L-glutamate 5-semialdehyde + phosphate + NADP(+) = N-acetyl-L-glutamyl 5-phosphate + NADPH + H(+)</text>
        <dbReference type="Rhea" id="RHEA:21588"/>
        <dbReference type="ChEBI" id="CHEBI:15378"/>
        <dbReference type="ChEBI" id="CHEBI:29123"/>
        <dbReference type="ChEBI" id="CHEBI:43474"/>
        <dbReference type="ChEBI" id="CHEBI:57783"/>
        <dbReference type="ChEBI" id="CHEBI:57936"/>
        <dbReference type="ChEBI" id="CHEBI:58349"/>
        <dbReference type="EC" id="1.2.1.38"/>
    </reaction>
</comment>
<comment type="pathway">
    <text evidence="1">Amino-acid biosynthesis; L-arginine biosynthesis; N(2)-acetyl-L-ornithine from L-glutamate: step 3/4.</text>
</comment>
<comment type="subcellular location">
    <subcellularLocation>
        <location evidence="1">Cytoplasm</location>
    </subcellularLocation>
</comment>
<comment type="similarity">
    <text evidence="1">Belongs to the NAGSA dehydrogenase family. Type 1 subfamily.</text>
</comment>
<evidence type="ECO:0000255" key="1">
    <source>
        <dbReference type="HAMAP-Rule" id="MF_00150"/>
    </source>
</evidence>
<dbReference type="EC" id="1.2.1.38" evidence="1"/>
<dbReference type="EMBL" id="AE014133">
    <property type="protein sequence ID" value="AAN58397.1"/>
    <property type="molecule type" value="Genomic_DNA"/>
</dbReference>
<dbReference type="RefSeq" id="NP_721091.1">
    <property type="nucleotide sequence ID" value="NC_004350.2"/>
</dbReference>
<dbReference type="RefSeq" id="WP_002261878.1">
    <property type="nucleotide sequence ID" value="NC_004350.2"/>
</dbReference>
<dbReference type="SMR" id="P59311"/>
<dbReference type="STRING" id="210007.SMU_663"/>
<dbReference type="KEGG" id="smu:SMU_663"/>
<dbReference type="PATRIC" id="fig|210007.7.peg.588"/>
<dbReference type="eggNOG" id="COG0002">
    <property type="taxonomic scope" value="Bacteria"/>
</dbReference>
<dbReference type="HOGENOM" id="CLU_006384_0_1_9"/>
<dbReference type="OrthoDB" id="9801289at2"/>
<dbReference type="PhylomeDB" id="P59311"/>
<dbReference type="UniPathway" id="UPA00068">
    <property type="reaction ID" value="UER00108"/>
</dbReference>
<dbReference type="Proteomes" id="UP000002512">
    <property type="component" value="Chromosome"/>
</dbReference>
<dbReference type="GO" id="GO:0005737">
    <property type="term" value="C:cytoplasm"/>
    <property type="evidence" value="ECO:0007669"/>
    <property type="project" value="UniProtKB-SubCell"/>
</dbReference>
<dbReference type="GO" id="GO:0003942">
    <property type="term" value="F:N-acetyl-gamma-glutamyl-phosphate reductase activity"/>
    <property type="evidence" value="ECO:0007669"/>
    <property type="project" value="UniProtKB-UniRule"/>
</dbReference>
<dbReference type="GO" id="GO:0051287">
    <property type="term" value="F:NAD binding"/>
    <property type="evidence" value="ECO:0007669"/>
    <property type="project" value="InterPro"/>
</dbReference>
<dbReference type="GO" id="GO:0070401">
    <property type="term" value="F:NADP+ binding"/>
    <property type="evidence" value="ECO:0007669"/>
    <property type="project" value="InterPro"/>
</dbReference>
<dbReference type="GO" id="GO:0006526">
    <property type="term" value="P:L-arginine biosynthetic process"/>
    <property type="evidence" value="ECO:0007669"/>
    <property type="project" value="UniProtKB-UniRule"/>
</dbReference>
<dbReference type="CDD" id="cd23934">
    <property type="entry name" value="AGPR_1_C"/>
    <property type="match status" value="1"/>
</dbReference>
<dbReference type="CDD" id="cd17895">
    <property type="entry name" value="AGPR_1_N"/>
    <property type="match status" value="1"/>
</dbReference>
<dbReference type="FunFam" id="3.30.360.10:FF:000014">
    <property type="entry name" value="N-acetyl-gamma-glutamyl-phosphate reductase"/>
    <property type="match status" value="1"/>
</dbReference>
<dbReference type="Gene3D" id="3.30.360.10">
    <property type="entry name" value="Dihydrodipicolinate Reductase, domain 2"/>
    <property type="match status" value="1"/>
</dbReference>
<dbReference type="Gene3D" id="3.40.50.720">
    <property type="entry name" value="NAD(P)-binding Rossmann-like Domain"/>
    <property type="match status" value="1"/>
</dbReference>
<dbReference type="HAMAP" id="MF_00150">
    <property type="entry name" value="ArgC_type1"/>
    <property type="match status" value="1"/>
</dbReference>
<dbReference type="InterPro" id="IPR023013">
    <property type="entry name" value="AGPR_AS"/>
</dbReference>
<dbReference type="InterPro" id="IPR000706">
    <property type="entry name" value="AGPR_type-1"/>
</dbReference>
<dbReference type="InterPro" id="IPR036291">
    <property type="entry name" value="NAD(P)-bd_dom_sf"/>
</dbReference>
<dbReference type="InterPro" id="IPR050085">
    <property type="entry name" value="NAGSA_dehydrogenase"/>
</dbReference>
<dbReference type="InterPro" id="IPR000534">
    <property type="entry name" value="Semialdehyde_DH_NAD-bd"/>
</dbReference>
<dbReference type="NCBIfam" id="TIGR01850">
    <property type="entry name" value="argC"/>
    <property type="match status" value="1"/>
</dbReference>
<dbReference type="PANTHER" id="PTHR32338:SF10">
    <property type="entry name" value="N-ACETYL-GAMMA-GLUTAMYL-PHOSPHATE REDUCTASE, CHLOROPLASTIC-RELATED"/>
    <property type="match status" value="1"/>
</dbReference>
<dbReference type="PANTHER" id="PTHR32338">
    <property type="entry name" value="N-ACETYL-GAMMA-GLUTAMYL-PHOSPHATE REDUCTASE, CHLOROPLASTIC-RELATED-RELATED"/>
    <property type="match status" value="1"/>
</dbReference>
<dbReference type="Pfam" id="PF01118">
    <property type="entry name" value="Semialdhyde_dh"/>
    <property type="match status" value="1"/>
</dbReference>
<dbReference type="Pfam" id="PF22698">
    <property type="entry name" value="Semialdhyde_dhC_1"/>
    <property type="match status" value="1"/>
</dbReference>
<dbReference type="SMART" id="SM00859">
    <property type="entry name" value="Semialdhyde_dh"/>
    <property type="match status" value="1"/>
</dbReference>
<dbReference type="SUPFAM" id="SSF55347">
    <property type="entry name" value="Glyceraldehyde-3-phosphate dehydrogenase-like, C-terminal domain"/>
    <property type="match status" value="1"/>
</dbReference>
<dbReference type="SUPFAM" id="SSF51735">
    <property type="entry name" value="NAD(P)-binding Rossmann-fold domains"/>
    <property type="match status" value="1"/>
</dbReference>
<dbReference type="PROSITE" id="PS01224">
    <property type="entry name" value="ARGC"/>
    <property type="match status" value="1"/>
</dbReference>
<gene>
    <name evidence="1" type="primary">argC</name>
    <name type="ordered locus">SMU_663</name>
</gene>
<organism>
    <name type="scientific">Streptococcus mutans serotype c (strain ATCC 700610 / UA159)</name>
    <dbReference type="NCBI Taxonomy" id="210007"/>
    <lineage>
        <taxon>Bacteria</taxon>
        <taxon>Bacillati</taxon>
        <taxon>Bacillota</taxon>
        <taxon>Bacilli</taxon>
        <taxon>Lactobacillales</taxon>
        <taxon>Streptococcaceae</taxon>
        <taxon>Streptococcus</taxon>
    </lineage>
</organism>
<protein>
    <recommendedName>
        <fullName evidence="1">N-acetyl-gamma-glutamyl-phosphate reductase</fullName>
        <shortName evidence="1">AGPR</shortName>
        <ecNumber evidence="1">1.2.1.38</ecNumber>
    </recommendedName>
    <alternativeName>
        <fullName evidence="1">N-acetyl-glutamate semialdehyde dehydrogenase</fullName>
        <shortName evidence="1">NAGSA dehydrogenase</shortName>
    </alternativeName>
</protein>
<name>ARGC_STRMU</name>
<feature type="chain" id="PRO_0000112459" description="N-acetyl-gamma-glutamyl-phosphate reductase">
    <location>
        <begin position="1"/>
        <end position="340"/>
    </location>
</feature>
<feature type="active site" evidence="1">
    <location>
        <position position="146"/>
    </location>
</feature>
<sequence>MKVSIVGITGYSGLELVRILNGHQKVELVSVHATKEIGTKLSDIYSYLKGICDLEIQSFDSQKIMATADLVFFATPSGVAKELAKDFIAADFPVIDISGDHRLPAAIYEKWYKKAAAEQASLDKFTYALAELTDVKGKKFIANPGCYATATELALLPLVKEKLIDVNSIIVDAKSGLTGAGKVLSESSHFVNVHDNYVTYKLNRHQHIPEIVQELKRFDNNLEHIQFSTSLLPVNRGIMATCYVTLKKPLSNEAVSKIYQDLYADKPFVRLQQDLPELHNVIGSNFCDIGFAYNPVTNVLTVISVIDNLVKGAAGQAVQNLNLMMGWDETEGFPMTPSYL</sequence>
<keyword id="KW-0028">Amino-acid biosynthesis</keyword>
<keyword id="KW-0055">Arginine biosynthesis</keyword>
<keyword id="KW-0963">Cytoplasm</keyword>
<keyword id="KW-0521">NADP</keyword>
<keyword id="KW-0560">Oxidoreductase</keyword>
<keyword id="KW-1185">Reference proteome</keyword>
<proteinExistence type="inferred from homology"/>